<gene>
    <name evidence="1" type="primary">mutS</name>
    <name type="ordered locus">CLL_A1823</name>
</gene>
<feature type="chain" id="PRO_1000093619" description="DNA mismatch repair protein MutS">
    <location>
        <begin position="1"/>
        <end position="942"/>
    </location>
</feature>
<feature type="binding site" evidence="1">
    <location>
        <begin position="613"/>
        <end position="620"/>
    </location>
    <ligand>
        <name>ATP</name>
        <dbReference type="ChEBI" id="CHEBI:30616"/>
    </ligand>
</feature>
<comment type="function">
    <text evidence="1">This protein is involved in the repair of mismatches in DNA. It is possible that it carries out the mismatch recognition step. This protein has a weak ATPase activity.</text>
</comment>
<comment type="similarity">
    <text evidence="1">Belongs to the DNA mismatch repair MutS family.</text>
</comment>
<reference key="1">
    <citation type="submission" date="2008-04" db="EMBL/GenBank/DDBJ databases">
        <title>Complete sequence of Clostridium botulinum strain Eklund.</title>
        <authorList>
            <person name="Brinkac L.M."/>
            <person name="Brown J.L."/>
            <person name="Bruce D."/>
            <person name="Detter C."/>
            <person name="Munk C."/>
            <person name="Smith L.A."/>
            <person name="Smith T.J."/>
            <person name="Sutton G."/>
            <person name="Brettin T.S."/>
        </authorList>
    </citation>
    <scope>NUCLEOTIDE SEQUENCE [LARGE SCALE GENOMIC DNA]</scope>
    <source>
        <strain>Eklund 17B / Type B</strain>
    </source>
</reference>
<keyword id="KW-0067">ATP-binding</keyword>
<keyword id="KW-0227">DNA damage</keyword>
<keyword id="KW-0234">DNA repair</keyword>
<keyword id="KW-0238">DNA-binding</keyword>
<keyword id="KW-0547">Nucleotide-binding</keyword>
<dbReference type="EMBL" id="CP001056">
    <property type="protein sequence ID" value="ACD24612.1"/>
    <property type="molecule type" value="Genomic_DNA"/>
</dbReference>
<dbReference type="SMR" id="B2TIC3"/>
<dbReference type="KEGG" id="cbk:CLL_A1823"/>
<dbReference type="PATRIC" id="fig|935198.13.peg.1769"/>
<dbReference type="HOGENOM" id="CLU_002472_3_1_9"/>
<dbReference type="Proteomes" id="UP000001195">
    <property type="component" value="Chromosome"/>
</dbReference>
<dbReference type="GO" id="GO:0005829">
    <property type="term" value="C:cytosol"/>
    <property type="evidence" value="ECO:0007669"/>
    <property type="project" value="TreeGrafter"/>
</dbReference>
<dbReference type="GO" id="GO:0005524">
    <property type="term" value="F:ATP binding"/>
    <property type="evidence" value="ECO:0007669"/>
    <property type="project" value="UniProtKB-UniRule"/>
</dbReference>
<dbReference type="GO" id="GO:0140664">
    <property type="term" value="F:ATP-dependent DNA damage sensor activity"/>
    <property type="evidence" value="ECO:0007669"/>
    <property type="project" value="InterPro"/>
</dbReference>
<dbReference type="GO" id="GO:0003684">
    <property type="term" value="F:damaged DNA binding"/>
    <property type="evidence" value="ECO:0007669"/>
    <property type="project" value="UniProtKB-UniRule"/>
</dbReference>
<dbReference type="GO" id="GO:0030983">
    <property type="term" value="F:mismatched DNA binding"/>
    <property type="evidence" value="ECO:0007669"/>
    <property type="project" value="InterPro"/>
</dbReference>
<dbReference type="GO" id="GO:0006298">
    <property type="term" value="P:mismatch repair"/>
    <property type="evidence" value="ECO:0007669"/>
    <property type="project" value="UniProtKB-UniRule"/>
</dbReference>
<dbReference type="CDD" id="cd03284">
    <property type="entry name" value="ABC_MutS1"/>
    <property type="match status" value="1"/>
</dbReference>
<dbReference type="FunFam" id="1.10.1420.10:FF:000007">
    <property type="entry name" value="DNA mismatch repair protein MutS"/>
    <property type="match status" value="1"/>
</dbReference>
<dbReference type="FunFam" id="3.40.1170.10:FF:000001">
    <property type="entry name" value="DNA mismatch repair protein MutS"/>
    <property type="match status" value="1"/>
</dbReference>
<dbReference type="FunFam" id="3.40.50.300:FF:001579">
    <property type="entry name" value="DNA mismatch repair protein MutS"/>
    <property type="match status" value="1"/>
</dbReference>
<dbReference type="Gene3D" id="1.10.1420.10">
    <property type="match status" value="2"/>
</dbReference>
<dbReference type="Gene3D" id="3.40.1170.10">
    <property type="entry name" value="DNA repair protein MutS, domain I"/>
    <property type="match status" value="1"/>
</dbReference>
<dbReference type="Gene3D" id="3.30.420.110">
    <property type="entry name" value="MutS, connector domain"/>
    <property type="match status" value="1"/>
</dbReference>
<dbReference type="Gene3D" id="3.40.50.300">
    <property type="entry name" value="P-loop containing nucleotide triphosphate hydrolases"/>
    <property type="match status" value="1"/>
</dbReference>
<dbReference type="HAMAP" id="MF_00096">
    <property type="entry name" value="MutS"/>
    <property type="match status" value="1"/>
</dbReference>
<dbReference type="InterPro" id="IPR005748">
    <property type="entry name" value="DNA_mismatch_repair_MutS"/>
</dbReference>
<dbReference type="InterPro" id="IPR007695">
    <property type="entry name" value="DNA_mismatch_repair_MutS-lik_N"/>
</dbReference>
<dbReference type="InterPro" id="IPR017261">
    <property type="entry name" value="DNA_mismatch_repair_MutS/MSH"/>
</dbReference>
<dbReference type="InterPro" id="IPR000432">
    <property type="entry name" value="DNA_mismatch_repair_MutS_C"/>
</dbReference>
<dbReference type="InterPro" id="IPR007861">
    <property type="entry name" value="DNA_mismatch_repair_MutS_clamp"/>
</dbReference>
<dbReference type="InterPro" id="IPR007696">
    <property type="entry name" value="DNA_mismatch_repair_MutS_core"/>
</dbReference>
<dbReference type="InterPro" id="IPR016151">
    <property type="entry name" value="DNA_mismatch_repair_MutS_N"/>
</dbReference>
<dbReference type="InterPro" id="IPR036187">
    <property type="entry name" value="DNA_mismatch_repair_MutS_sf"/>
</dbReference>
<dbReference type="InterPro" id="IPR007860">
    <property type="entry name" value="DNA_mmatch_repair_MutS_con_dom"/>
</dbReference>
<dbReference type="InterPro" id="IPR045076">
    <property type="entry name" value="MutS"/>
</dbReference>
<dbReference type="InterPro" id="IPR036678">
    <property type="entry name" value="MutS_con_dom_sf"/>
</dbReference>
<dbReference type="InterPro" id="IPR027417">
    <property type="entry name" value="P-loop_NTPase"/>
</dbReference>
<dbReference type="NCBIfam" id="TIGR01070">
    <property type="entry name" value="mutS1"/>
    <property type="match status" value="1"/>
</dbReference>
<dbReference type="NCBIfam" id="NF003810">
    <property type="entry name" value="PRK05399.1"/>
    <property type="match status" value="1"/>
</dbReference>
<dbReference type="PANTHER" id="PTHR11361:SF34">
    <property type="entry name" value="DNA MISMATCH REPAIR PROTEIN MSH1, MITOCHONDRIAL"/>
    <property type="match status" value="1"/>
</dbReference>
<dbReference type="PANTHER" id="PTHR11361">
    <property type="entry name" value="DNA MISMATCH REPAIR PROTEIN MUTS FAMILY MEMBER"/>
    <property type="match status" value="1"/>
</dbReference>
<dbReference type="Pfam" id="PF01624">
    <property type="entry name" value="MutS_I"/>
    <property type="match status" value="1"/>
</dbReference>
<dbReference type="Pfam" id="PF05188">
    <property type="entry name" value="MutS_II"/>
    <property type="match status" value="1"/>
</dbReference>
<dbReference type="Pfam" id="PF05192">
    <property type="entry name" value="MutS_III"/>
    <property type="match status" value="1"/>
</dbReference>
<dbReference type="Pfam" id="PF05190">
    <property type="entry name" value="MutS_IV"/>
    <property type="match status" value="1"/>
</dbReference>
<dbReference type="Pfam" id="PF00488">
    <property type="entry name" value="MutS_V"/>
    <property type="match status" value="1"/>
</dbReference>
<dbReference type="PIRSF" id="PIRSF037677">
    <property type="entry name" value="DNA_mis_repair_Msh6"/>
    <property type="match status" value="1"/>
</dbReference>
<dbReference type="SMART" id="SM00534">
    <property type="entry name" value="MUTSac"/>
    <property type="match status" value="1"/>
</dbReference>
<dbReference type="SMART" id="SM00533">
    <property type="entry name" value="MUTSd"/>
    <property type="match status" value="1"/>
</dbReference>
<dbReference type="SUPFAM" id="SSF55271">
    <property type="entry name" value="DNA repair protein MutS, domain I"/>
    <property type="match status" value="1"/>
</dbReference>
<dbReference type="SUPFAM" id="SSF53150">
    <property type="entry name" value="DNA repair protein MutS, domain II"/>
    <property type="match status" value="1"/>
</dbReference>
<dbReference type="SUPFAM" id="SSF48334">
    <property type="entry name" value="DNA repair protein MutS, domain III"/>
    <property type="match status" value="1"/>
</dbReference>
<dbReference type="SUPFAM" id="SSF52540">
    <property type="entry name" value="P-loop containing nucleoside triphosphate hydrolases"/>
    <property type="match status" value="1"/>
</dbReference>
<dbReference type="PROSITE" id="PS00486">
    <property type="entry name" value="DNA_MISMATCH_REPAIR_2"/>
    <property type="match status" value="1"/>
</dbReference>
<organism>
    <name type="scientific">Clostridium botulinum (strain Eklund 17B / Type B)</name>
    <dbReference type="NCBI Taxonomy" id="935198"/>
    <lineage>
        <taxon>Bacteria</taxon>
        <taxon>Bacillati</taxon>
        <taxon>Bacillota</taxon>
        <taxon>Clostridia</taxon>
        <taxon>Eubacteriales</taxon>
        <taxon>Clostridiaceae</taxon>
        <taxon>Clostridium</taxon>
    </lineage>
</organism>
<proteinExistence type="inferred from homology"/>
<accession>B2TIC3</accession>
<sequence>MALTPMMVEYMKTKEEYNDCILFYRLGDFYEMFFDDALTVSRELELVLTGKNCGLEERAPMCGIPHHAAAAYIPRLVTKGYKVAICEQLEDPKQSKGIVKRGVVKVITPGTFIDSNSNLENDNTYLMVISEYEDKFGIAMSDISTGEFKTTSFNNIKMSLLDEISKVSPKEILVDININEELLTEINNVLPVLITKKDFNEFLVSKEELIEQFSDLEVSGLTIEREIPSKVLLKYINETQKMSLTNINLLEQYEIINYMTIDGNSRRNLELTESIREKTKKGSLLWVIDKSATSMGGRTLRKWIDEPLIVKDEIEKRLSGVEEVFNSIGFNEDLRSALKEIYDIERIVGKISNKNVNAKDLLSLKSSLDKLPCIKELLKNTSSELLKGYYENLDELIDVRDLLNDSIKEDPGLGLKEGNIIKDGYNNLVDELRESKLHGKEWIAALENREREFTGIKSLKVGYNKVFGYYIEISKSNYNSIPEGRYIRKQTLANAERFITEELKVMEDKILGSEEKLINLEYSIFVEIRDKIEEEISRLKKSARIISDLDGISTLALVALENDYIKPEINTDGLIKIIDGRHPVVEKVIGKGDFVSNNTALNQTDKELLLITGPNMAGKSTYMRQVALITLMAQMGSFVPATSANISICDKIFTRIGASDDLAGGKSTFMVEMWEVSNILKNATSNSLVLLDEVGRGTSTYDGLSIAWSVIEYITKNKDLRCKTLFATHYHELVKLEGILPGVKNYSVAVKKLKDSVVFLRKIVEGGADESYGIEVAKLAGLPENVINRAREILEDLEGKNTFDINKVSSCSMVSNNIKEIAVDSTKNSEDKVISNAQNIDVNETSCKDTTKEKILRVETQNAEYEEAIKSLKSEITKLQELNKKHNKKHKDVSNDNMQINFEVMEKENFIKELSEVDILGLNPMEAMNTLYRLVTDAKKLQ</sequence>
<protein>
    <recommendedName>
        <fullName evidence="1">DNA mismatch repair protein MutS</fullName>
    </recommendedName>
</protein>
<name>MUTS_CLOBB</name>
<evidence type="ECO:0000255" key="1">
    <source>
        <dbReference type="HAMAP-Rule" id="MF_00096"/>
    </source>
</evidence>